<organism>
    <name type="scientific">Schizosaccharomyces pombe (strain 972 / ATCC 24843)</name>
    <name type="common">Fission yeast</name>
    <dbReference type="NCBI Taxonomy" id="284812"/>
    <lineage>
        <taxon>Eukaryota</taxon>
        <taxon>Fungi</taxon>
        <taxon>Dikarya</taxon>
        <taxon>Ascomycota</taxon>
        <taxon>Taphrinomycotina</taxon>
        <taxon>Schizosaccharomycetes</taxon>
        <taxon>Schizosaccharomycetales</taxon>
        <taxon>Schizosaccharomycetaceae</taxon>
        <taxon>Schizosaccharomyces</taxon>
    </lineage>
</organism>
<proteinExistence type="predicted"/>
<feature type="chain" id="PRO_0000303989" description="Putative uncharacterized protein C16C4.21">
    <location>
        <begin position="1"/>
        <end position="81"/>
    </location>
</feature>
<reference key="1">
    <citation type="journal article" date="2002" name="Nature">
        <title>The genome sequence of Schizosaccharomyces pombe.</title>
        <authorList>
            <person name="Wood V."/>
            <person name="Gwilliam R."/>
            <person name="Rajandream M.A."/>
            <person name="Lyne M.H."/>
            <person name="Lyne R."/>
            <person name="Stewart A."/>
            <person name="Sgouros J.G."/>
            <person name="Peat N."/>
            <person name="Hayles J."/>
            <person name="Baker S.G."/>
            <person name="Basham D."/>
            <person name="Bowman S."/>
            <person name="Brooks K."/>
            <person name="Brown D."/>
            <person name="Brown S."/>
            <person name="Chillingworth T."/>
            <person name="Churcher C.M."/>
            <person name="Collins M."/>
            <person name="Connor R."/>
            <person name="Cronin A."/>
            <person name="Davis P."/>
            <person name="Feltwell T."/>
            <person name="Fraser A."/>
            <person name="Gentles S."/>
            <person name="Goble A."/>
            <person name="Hamlin N."/>
            <person name="Harris D.E."/>
            <person name="Hidalgo J."/>
            <person name="Hodgson G."/>
            <person name="Holroyd S."/>
            <person name="Hornsby T."/>
            <person name="Howarth S."/>
            <person name="Huckle E.J."/>
            <person name="Hunt S."/>
            <person name="Jagels K."/>
            <person name="James K.D."/>
            <person name="Jones L."/>
            <person name="Jones M."/>
            <person name="Leather S."/>
            <person name="McDonald S."/>
            <person name="McLean J."/>
            <person name="Mooney P."/>
            <person name="Moule S."/>
            <person name="Mungall K.L."/>
            <person name="Murphy L.D."/>
            <person name="Niblett D."/>
            <person name="Odell C."/>
            <person name="Oliver K."/>
            <person name="O'Neil S."/>
            <person name="Pearson D."/>
            <person name="Quail M.A."/>
            <person name="Rabbinowitsch E."/>
            <person name="Rutherford K.M."/>
            <person name="Rutter S."/>
            <person name="Saunders D."/>
            <person name="Seeger K."/>
            <person name="Sharp S."/>
            <person name="Skelton J."/>
            <person name="Simmonds M.N."/>
            <person name="Squares R."/>
            <person name="Squares S."/>
            <person name="Stevens K."/>
            <person name="Taylor K."/>
            <person name="Taylor R.G."/>
            <person name="Tivey A."/>
            <person name="Walsh S.V."/>
            <person name="Warren T."/>
            <person name="Whitehead S."/>
            <person name="Woodward J.R."/>
            <person name="Volckaert G."/>
            <person name="Aert R."/>
            <person name="Robben J."/>
            <person name="Grymonprez B."/>
            <person name="Weltjens I."/>
            <person name="Vanstreels E."/>
            <person name="Rieger M."/>
            <person name="Schaefer M."/>
            <person name="Mueller-Auer S."/>
            <person name="Gabel C."/>
            <person name="Fuchs M."/>
            <person name="Duesterhoeft A."/>
            <person name="Fritzc C."/>
            <person name="Holzer E."/>
            <person name="Moestl D."/>
            <person name="Hilbert H."/>
            <person name="Borzym K."/>
            <person name="Langer I."/>
            <person name="Beck A."/>
            <person name="Lehrach H."/>
            <person name="Reinhardt R."/>
            <person name="Pohl T.M."/>
            <person name="Eger P."/>
            <person name="Zimmermann W."/>
            <person name="Wedler H."/>
            <person name="Wambutt R."/>
            <person name="Purnelle B."/>
            <person name="Goffeau A."/>
            <person name="Cadieu E."/>
            <person name="Dreano S."/>
            <person name="Gloux S."/>
            <person name="Lelaure V."/>
            <person name="Mottier S."/>
            <person name="Galibert F."/>
            <person name="Aves S.J."/>
            <person name="Xiang Z."/>
            <person name="Hunt C."/>
            <person name="Moore K."/>
            <person name="Hurst S.M."/>
            <person name="Lucas M."/>
            <person name="Rochet M."/>
            <person name="Gaillardin C."/>
            <person name="Tallada V.A."/>
            <person name="Garzon A."/>
            <person name="Thode G."/>
            <person name="Daga R.R."/>
            <person name="Cruzado L."/>
            <person name="Jimenez J."/>
            <person name="Sanchez M."/>
            <person name="del Rey F."/>
            <person name="Benito J."/>
            <person name="Dominguez A."/>
            <person name="Revuelta J.L."/>
            <person name="Moreno S."/>
            <person name="Armstrong J."/>
            <person name="Forsburg S.L."/>
            <person name="Cerutti L."/>
            <person name="Lowe T."/>
            <person name="McCombie W.R."/>
            <person name="Paulsen I."/>
            <person name="Potashkin J."/>
            <person name="Shpakovski G.V."/>
            <person name="Ussery D."/>
            <person name="Barrell B.G."/>
            <person name="Nurse P."/>
        </authorList>
    </citation>
    <scope>NUCLEOTIDE SEQUENCE [LARGE SCALE GENOMIC DNA]</scope>
    <source>
        <strain>972 / ATCC 24843</strain>
    </source>
</reference>
<dbReference type="EMBL" id="CU329672">
    <property type="protein sequence ID" value="CAO77686.1"/>
    <property type="molecule type" value="Genomic_DNA"/>
</dbReference>
<dbReference type="RefSeq" id="XP_001713163.1">
    <property type="nucleotide sequence ID" value="XM_001713111.2"/>
</dbReference>
<dbReference type="iPTMnet" id="A6X992"/>
<dbReference type="PaxDb" id="4896-SPCC16C4.21.1"/>
<dbReference type="EnsemblFungi" id="SPCC16C4.21.1">
    <property type="protein sequence ID" value="SPCC16C4.21.1:pep"/>
    <property type="gene ID" value="SPCC16C4.21"/>
</dbReference>
<dbReference type="PomBase" id="SPCC16C4.21"/>
<dbReference type="VEuPathDB" id="FungiDB:SPCC16C4.21"/>
<dbReference type="HOGENOM" id="CLU_2575233_0_0_1"/>
<dbReference type="InParanoid" id="A6X992"/>
<dbReference type="PRO" id="PR:A6X992"/>
<dbReference type="Proteomes" id="UP000002485">
    <property type="component" value="Chromosome III"/>
</dbReference>
<gene>
    <name type="ORF">SPCC16C4.21</name>
</gene>
<accession>A6X992</accession>
<sequence>MQLYPANVKGLRYSECCILTANPSVQHFVMHDDAGVPLTYSVSTLHAELTDHLYLPTTRKTVAVGKKTLFVVQKKRFKPET</sequence>
<name>YCGL_SCHPO</name>
<keyword id="KW-1185">Reference proteome</keyword>
<protein>
    <recommendedName>
        <fullName>Putative uncharacterized protein C16C4.21</fullName>
    </recommendedName>
</protein>